<comment type="function">
    <text evidence="1">Transforms N(2)-succinylglutamate into succinate and glutamate.</text>
</comment>
<comment type="catalytic activity">
    <reaction evidence="1">
        <text>N-succinyl-L-glutamate + H2O = L-glutamate + succinate</text>
        <dbReference type="Rhea" id="RHEA:15169"/>
        <dbReference type="ChEBI" id="CHEBI:15377"/>
        <dbReference type="ChEBI" id="CHEBI:29985"/>
        <dbReference type="ChEBI" id="CHEBI:30031"/>
        <dbReference type="ChEBI" id="CHEBI:58763"/>
        <dbReference type="EC" id="3.5.1.96"/>
    </reaction>
</comment>
<comment type="cofactor">
    <cofactor evidence="1">
        <name>Zn(2+)</name>
        <dbReference type="ChEBI" id="CHEBI:29105"/>
    </cofactor>
    <text evidence="1">Binds 1 zinc ion per subunit.</text>
</comment>
<comment type="pathway">
    <text evidence="1">Amino-acid degradation; L-arginine degradation via AST pathway; L-glutamate and succinate from L-arginine: step 5/5.</text>
</comment>
<comment type="similarity">
    <text evidence="1">Belongs to the AspA/AstE family. Succinylglutamate desuccinylase subfamily.</text>
</comment>
<name>ASTE_SALG2</name>
<keyword id="KW-0056">Arginine metabolism</keyword>
<keyword id="KW-0378">Hydrolase</keyword>
<keyword id="KW-0479">Metal-binding</keyword>
<keyword id="KW-0862">Zinc</keyword>
<proteinExistence type="inferred from homology"/>
<organism>
    <name type="scientific">Salmonella gallinarum (strain 287/91 / NCTC 13346)</name>
    <dbReference type="NCBI Taxonomy" id="550538"/>
    <lineage>
        <taxon>Bacteria</taxon>
        <taxon>Pseudomonadati</taxon>
        <taxon>Pseudomonadota</taxon>
        <taxon>Gammaproteobacteria</taxon>
        <taxon>Enterobacterales</taxon>
        <taxon>Enterobacteriaceae</taxon>
        <taxon>Salmonella</taxon>
    </lineage>
</organism>
<protein>
    <recommendedName>
        <fullName evidence="1">Succinylglutamate desuccinylase</fullName>
        <ecNumber evidence="1">3.5.1.96</ecNumber>
    </recommendedName>
</protein>
<accession>B5RAZ7</accession>
<dbReference type="EC" id="3.5.1.96" evidence="1"/>
<dbReference type="EMBL" id="AM933173">
    <property type="protein sequence ID" value="CAR37665.1"/>
    <property type="molecule type" value="Genomic_DNA"/>
</dbReference>
<dbReference type="RefSeq" id="WP_000368441.1">
    <property type="nucleotide sequence ID" value="NC_011274.1"/>
</dbReference>
<dbReference type="SMR" id="B5RAZ7"/>
<dbReference type="KEGG" id="seg:SG1809"/>
<dbReference type="HOGENOM" id="CLU_071608_0_0_6"/>
<dbReference type="UniPathway" id="UPA00185">
    <property type="reaction ID" value="UER00283"/>
</dbReference>
<dbReference type="Proteomes" id="UP000008321">
    <property type="component" value="Chromosome"/>
</dbReference>
<dbReference type="GO" id="GO:0016788">
    <property type="term" value="F:hydrolase activity, acting on ester bonds"/>
    <property type="evidence" value="ECO:0007669"/>
    <property type="project" value="UniProtKB-UniRule"/>
</dbReference>
<dbReference type="GO" id="GO:0009017">
    <property type="term" value="F:succinylglutamate desuccinylase activity"/>
    <property type="evidence" value="ECO:0007669"/>
    <property type="project" value="UniProtKB-EC"/>
</dbReference>
<dbReference type="GO" id="GO:0008270">
    <property type="term" value="F:zinc ion binding"/>
    <property type="evidence" value="ECO:0007669"/>
    <property type="project" value="UniProtKB-UniRule"/>
</dbReference>
<dbReference type="GO" id="GO:0019544">
    <property type="term" value="P:arginine catabolic process to glutamate"/>
    <property type="evidence" value="ECO:0007669"/>
    <property type="project" value="UniProtKB-UniRule"/>
</dbReference>
<dbReference type="GO" id="GO:0019545">
    <property type="term" value="P:arginine catabolic process to succinate"/>
    <property type="evidence" value="ECO:0007669"/>
    <property type="project" value="UniProtKB-UniRule"/>
</dbReference>
<dbReference type="CDD" id="cd03855">
    <property type="entry name" value="M14_ASTE"/>
    <property type="match status" value="1"/>
</dbReference>
<dbReference type="FunFam" id="3.40.630.10:FF:000017">
    <property type="entry name" value="Succinylglutamate desuccinylase"/>
    <property type="match status" value="1"/>
</dbReference>
<dbReference type="Gene3D" id="3.40.630.10">
    <property type="entry name" value="Zn peptidases"/>
    <property type="match status" value="1"/>
</dbReference>
<dbReference type="HAMAP" id="MF_00767">
    <property type="entry name" value="Arg_catab_AstE"/>
    <property type="match status" value="1"/>
</dbReference>
<dbReference type="InterPro" id="IPR050178">
    <property type="entry name" value="AspA/AstE_fam"/>
</dbReference>
<dbReference type="InterPro" id="IPR055438">
    <property type="entry name" value="AstE_AspA_cat"/>
</dbReference>
<dbReference type="InterPro" id="IPR007036">
    <property type="entry name" value="Aste_AspA_hybrid_dom"/>
</dbReference>
<dbReference type="InterPro" id="IPR016681">
    <property type="entry name" value="SuccinylGlu_desuccinylase"/>
</dbReference>
<dbReference type="NCBIfam" id="TIGR03242">
    <property type="entry name" value="arg_catab_astE"/>
    <property type="match status" value="1"/>
</dbReference>
<dbReference type="NCBIfam" id="NF003706">
    <property type="entry name" value="PRK05324.1"/>
    <property type="match status" value="1"/>
</dbReference>
<dbReference type="PANTHER" id="PTHR15162">
    <property type="entry name" value="ASPARTOACYLASE"/>
    <property type="match status" value="1"/>
</dbReference>
<dbReference type="PANTHER" id="PTHR15162:SF7">
    <property type="entry name" value="SUCCINYLGLUTAMATE DESUCCINYLASE"/>
    <property type="match status" value="1"/>
</dbReference>
<dbReference type="Pfam" id="PF24827">
    <property type="entry name" value="AstE_AspA_cat"/>
    <property type="match status" value="1"/>
</dbReference>
<dbReference type="Pfam" id="PF04952">
    <property type="entry name" value="AstE_AspA_hybrid"/>
    <property type="match status" value="1"/>
</dbReference>
<dbReference type="PIRSF" id="PIRSF017020">
    <property type="entry name" value="AstE"/>
    <property type="match status" value="1"/>
</dbReference>
<dbReference type="SUPFAM" id="SSF53187">
    <property type="entry name" value="Zn-dependent exopeptidases"/>
    <property type="match status" value="1"/>
</dbReference>
<sequence>MDNFLALTLSGTTPRVRQGKGAGFRWRWLSHGLLELTPDAPVDRALILSAGIHGNETAPVEMLDKLLSALYSGSLTLTWRVLVVLGNPQALAAGIRYCHSDMNRMFGGRWQSFAESDETRRARELELSLDTFFSSGQARVRWHLDLHTAIRGSHHLRFGVLPQRDRPWETDFLAWLGAAGLEALVFHQAPGGTFTHFSSEHFGALSCTLELGKALPFRQNDLTQFNVTSQALSALLSGVETSTSFSPPLRYRVVSQITRHSDKFALYMDAQTLNFTAFAKGTLLAEEGDKRVTVTHDVEYVLFPNPSVACGLRAGLMLERLP</sequence>
<feature type="chain" id="PRO_1000133641" description="Succinylglutamate desuccinylase">
    <location>
        <begin position="1"/>
        <end position="322"/>
    </location>
</feature>
<feature type="active site" evidence="1">
    <location>
        <position position="210"/>
    </location>
</feature>
<feature type="binding site" evidence="1">
    <location>
        <position position="53"/>
    </location>
    <ligand>
        <name>Zn(2+)</name>
        <dbReference type="ChEBI" id="CHEBI:29105"/>
    </ligand>
</feature>
<feature type="binding site" evidence="1">
    <location>
        <position position="56"/>
    </location>
    <ligand>
        <name>Zn(2+)</name>
        <dbReference type="ChEBI" id="CHEBI:29105"/>
    </ligand>
</feature>
<feature type="binding site" evidence="1">
    <location>
        <position position="147"/>
    </location>
    <ligand>
        <name>Zn(2+)</name>
        <dbReference type="ChEBI" id="CHEBI:29105"/>
    </ligand>
</feature>
<evidence type="ECO:0000255" key="1">
    <source>
        <dbReference type="HAMAP-Rule" id="MF_00767"/>
    </source>
</evidence>
<reference key="1">
    <citation type="journal article" date="2008" name="Genome Res.">
        <title>Comparative genome analysis of Salmonella enteritidis PT4 and Salmonella gallinarum 287/91 provides insights into evolutionary and host adaptation pathways.</title>
        <authorList>
            <person name="Thomson N.R."/>
            <person name="Clayton D.J."/>
            <person name="Windhorst D."/>
            <person name="Vernikos G."/>
            <person name="Davidson S."/>
            <person name="Churcher C."/>
            <person name="Quail M.A."/>
            <person name="Stevens M."/>
            <person name="Jones M.A."/>
            <person name="Watson M."/>
            <person name="Barron A."/>
            <person name="Layton A."/>
            <person name="Pickard D."/>
            <person name="Kingsley R.A."/>
            <person name="Bignell A."/>
            <person name="Clark L."/>
            <person name="Harris B."/>
            <person name="Ormond D."/>
            <person name="Abdellah Z."/>
            <person name="Brooks K."/>
            <person name="Cherevach I."/>
            <person name="Chillingworth T."/>
            <person name="Woodward J."/>
            <person name="Norberczak H."/>
            <person name="Lord A."/>
            <person name="Arrowsmith C."/>
            <person name="Jagels K."/>
            <person name="Moule S."/>
            <person name="Mungall K."/>
            <person name="Saunders M."/>
            <person name="Whitehead S."/>
            <person name="Chabalgoity J.A."/>
            <person name="Maskell D."/>
            <person name="Humphreys T."/>
            <person name="Roberts M."/>
            <person name="Barrow P.A."/>
            <person name="Dougan G."/>
            <person name="Parkhill J."/>
        </authorList>
    </citation>
    <scope>NUCLEOTIDE SEQUENCE [LARGE SCALE GENOMIC DNA]</scope>
    <source>
        <strain>287/91 / NCTC 13346</strain>
    </source>
</reference>
<gene>
    <name evidence="1" type="primary">astE</name>
    <name type="ordered locus">SG1809</name>
</gene>